<comment type="function">
    <text evidence="1">Catalyzes the transfer of the diacylglyceryl group from phosphatidylglycerol to the sulfhydryl group of the N-terminal cysteine of a prolipoprotein, the first step in the formation of mature lipoproteins.</text>
</comment>
<comment type="catalytic activity">
    <reaction evidence="1">
        <text>L-cysteinyl-[prolipoprotein] + a 1,2-diacyl-sn-glycero-3-phospho-(1'-sn-glycerol) = an S-1,2-diacyl-sn-glyceryl-L-cysteinyl-[prolipoprotein] + sn-glycerol 1-phosphate + H(+)</text>
        <dbReference type="Rhea" id="RHEA:56712"/>
        <dbReference type="Rhea" id="RHEA-COMP:14679"/>
        <dbReference type="Rhea" id="RHEA-COMP:14680"/>
        <dbReference type="ChEBI" id="CHEBI:15378"/>
        <dbReference type="ChEBI" id="CHEBI:29950"/>
        <dbReference type="ChEBI" id="CHEBI:57685"/>
        <dbReference type="ChEBI" id="CHEBI:64716"/>
        <dbReference type="ChEBI" id="CHEBI:140658"/>
        <dbReference type="EC" id="2.5.1.145"/>
    </reaction>
</comment>
<comment type="pathway">
    <text evidence="1">Protein modification; lipoprotein biosynthesis (diacylglyceryl transfer).</text>
</comment>
<comment type="subcellular location">
    <subcellularLocation>
        <location evidence="1">Cell inner membrane</location>
        <topology evidence="1">Multi-pass membrane protein</topology>
    </subcellularLocation>
</comment>
<comment type="similarity">
    <text evidence="1">Belongs to the Lgt family.</text>
</comment>
<keyword id="KW-0997">Cell inner membrane</keyword>
<keyword id="KW-1003">Cell membrane</keyword>
<keyword id="KW-0472">Membrane</keyword>
<keyword id="KW-1185">Reference proteome</keyword>
<keyword id="KW-0808">Transferase</keyword>
<keyword id="KW-0812">Transmembrane</keyword>
<keyword id="KW-1133">Transmembrane helix</keyword>
<proteinExistence type="inferred from homology"/>
<name>LGT_POLSJ</name>
<sequence>MLIHPQINPVALQLGPLAIHWYGLTYLAAFGLFFFLATRRLRHEPYASITGPGAWSRKDIEDILFLGVMGVVIGGRLGYCLFYKPGYYLAHPLEILAVWQGGMSFHGGMLGVLASQFWFARTRQRPWLQVMDFVAPCVPTGLAAGRMGNFINGELWGRFSSPDLPWGMVFRNSGSMLPRHPSQVYQFLLEGLLLFVLLWLYARKPRKMGQVSGAFLVGYGVFRFIAEYFREPDDFLGILALGLSMGQWLCVPMIVGGAGLWWWASQRAASAPAARA</sequence>
<gene>
    <name evidence="1" type="primary">lgt</name>
    <name type="ordered locus">Bpro_2087</name>
</gene>
<organism>
    <name type="scientific">Polaromonas sp. (strain JS666 / ATCC BAA-500)</name>
    <dbReference type="NCBI Taxonomy" id="296591"/>
    <lineage>
        <taxon>Bacteria</taxon>
        <taxon>Pseudomonadati</taxon>
        <taxon>Pseudomonadota</taxon>
        <taxon>Betaproteobacteria</taxon>
        <taxon>Burkholderiales</taxon>
        <taxon>Comamonadaceae</taxon>
        <taxon>Polaromonas</taxon>
    </lineage>
</organism>
<feature type="chain" id="PRO_1000053465" description="Phosphatidylglycerol--prolipoprotein diacylglyceryl transferase">
    <location>
        <begin position="1"/>
        <end position="276"/>
    </location>
</feature>
<feature type="transmembrane region" description="Helical" evidence="1">
    <location>
        <begin position="17"/>
        <end position="37"/>
    </location>
</feature>
<feature type="transmembrane region" description="Helical" evidence="1">
    <location>
        <begin position="63"/>
        <end position="83"/>
    </location>
</feature>
<feature type="transmembrane region" description="Helical" evidence="1">
    <location>
        <begin position="95"/>
        <end position="115"/>
    </location>
</feature>
<feature type="transmembrane region" description="Helical" evidence="1">
    <location>
        <begin position="182"/>
        <end position="202"/>
    </location>
</feature>
<feature type="transmembrane region" description="Helical" evidence="1">
    <location>
        <begin position="209"/>
        <end position="229"/>
    </location>
</feature>
<feature type="transmembrane region" description="Helical" evidence="1">
    <location>
        <begin position="235"/>
        <end position="255"/>
    </location>
</feature>
<feature type="binding site" evidence="1">
    <location>
        <position position="146"/>
    </location>
    <ligand>
        <name>a 1,2-diacyl-sn-glycero-3-phospho-(1'-sn-glycerol)</name>
        <dbReference type="ChEBI" id="CHEBI:64716"/>
    </ligand>
</feature>
<reference key="1">
    <citation type="journal article" date="2008" name="Appl. Environ. Microbiol.">
        <title>The genome of Polaromonas sp. strain JS666: insights into the evolution of a hydrocarbon- and xenobiotic-degrading bacterium, and features of relevance to biotechnology.</title>
        <authorList>
            <person name="Mattes T.E."/>
            <person name="Alexander A.K."/>
            <person name="Richardson P.M."/>
            <person name="Munk A.C."/>
            <person name="Han C.S."/>
            <person name="Stothard P."/>
            <person name="Coleman N.V."/>
        </authorList>
    </citation>
    <scope>NUCLEOTIDE SEQUENCE [LARGE SCALE GENOMIC DNA]</scope>
    <source>
        <strain>JS666 / ATCC BAA-500</strain>
    </source>
</reference>
<evidence type="ECO:0000255" key="1">
    <source>
        <dbReference type="HAMAP-Rule" id="MF_01147"/>
    </source>
</evidence>
<dbReference type="EC" id="2.5.1.145" evidence="1"/>
<dbReference type="EMBL" id="CP000316">
    <property type="protein sequence ID" value="ABE44014.1"/>
    <property type="molecule type" value="Genomic_DNA"/>
</dbReference>
<dbReference type="RefSeq" id="WP_011483013.1">
    <property type="nucleotide sequence ID" value="NC_007948.1"/>
</dbReference>
<dbReference type="SMR" id="Q12BS8"/>
<dbReference type="STRING" id="296591.Bpro_2087"/>
<dbReference type="KEGG" id="pol:Bpro_2087"/>
<dbReference type="eggNOG" id="COG0682">
    <property type="taxonomic scope" value="Bacteria"/>
</dbReference>
<dbReference type="HOGENOM" id="CLU_013386_1_0_4"/>
<dbReference type="OrthoDB" id="871140at2"/>
<dbReference type="UniPathway" id="UPA00664"/>
<dbReference type="Proteomes" id="UP000001983">
    <property type="component" value="Chromosome"/>
</dbReference>
<dbReference type="GO" id="GO:0005886">
    <property type="term" value="C:plasma membrane"/>
    <property type="evidence" value="ECO:0007669"/>
    <property type="project" value="UniProtKB-SubCell"/>
</dbReference>
<dbReference type="GO" id="GO:0008961">
    <property type="term" value="F:phosphatidylglycerol-prolipoprotein diacylglyceryl transferase activity"/>
    <property type="evidence" value="ECO:0007669"/>
    <property type="project" value="UniProtKB-UniRule"/>
</dbReference>
<dbReference type="GO" id="GO:0042158">
    <property type="term" value="P:lipoprotein biosynthetic process"/>
    <property type="evidence" value="ECO:0007669"/>
    <property type="project" value="UniProtKB-UniRule"/>
</dbReference>
<dbReference type="HAMAP" id="MF_01147">
    <property type="entry name" value="Lgt"/>
    <property type="match status" value="1"/>
</dbReference>
<dbReference type="InterPro" id="IPR001640">
    <property type="entry name" value="Lgt"/>
</dbReference>
<dbReference type="NCBIfam" id="TIGR00544">
    <property type="entry name" value="lgt"/>
    <property type="match status" value="1"/>
</dbReference>
<dbReference type="PANTHER" id="PTHR30589:SF0">
    <property type="entry name" value="PHOSPHATIDYLGLYCEROL--PROLIPOPROTEIN DIACYLGLYCERYL TRANSFERASE"/>
    <property type="match status" value="1"/>
</dbReference>
<dbReference type="PANTHER" id="PTHR30589">
    <property type="entry name" value="PROLIPOPROTEIN DIACYLGLYCERYL TRANSFERASE"/>
    <property type="match status" value="1"/>
</dbReference>
<dbReference type="Pfam" id="PF01790">
    <property type="entry name" value="LGT"/>
    <property type="match status" value="1"/>
</dbReference>
<dbReference type="PROSITE" id="PS01311">
    <property type="entry name" value="LGT"/>
    <property type="match status" value="1"/>
</dbReference>
<accession>Q12BS8</accession>
<protein>
    <recommendedName>
        <fullName evidence="1">Phosphatidylglycerol--prolipoprotein diacylglyceryl transferase</fullName>
        <ecNumber evidence="1">2.5.1.145</ecNumber>
    </recommendedName>
</protein>